<protein>
    <recommendedName>
        <fullName evidence="2">Formamidopyrimidine-DNA glycosylase</fullName>
        <shortName evidence="2">Fapy-DNA glycosylase</shortName>
        <ecNumber evidence="2">3.2.2.23</ecNumber>
    </recommendedName>
    <alternativeName>
        <fullName evidence="2">DNA-(apurinic or apyrimidinic site) lyase MutM</fullName>
        <shortName evidence="2">AP lyase MutM</shortName>
        <ecNumber evidence="2">4.2.99.18</ecNumber>
    </alternativeName>
</protein>
<reference key="1">
    <citation type="submission" date="2007-11" db="EMBL/GenBank/DDBJ databases">
        <authorList>
            <consortium name="The Salmonella enterica serovar Arizonae Genome Sequencing Project"/>
            <person name="McClelland M."/>
            <person name="Sanderson E.K."/>
            <person name="Porwollik S."/>
            <person name="Spieth J."/>
            <person name="Clifton W.S."/>
            <person name="Fulton R."/>
            <person name="Chunyan W."/>
            <person name="Wollam A."/>
            <person name="Shah N."/>
            <person name="Pepin K."/>
            <person name="Bhonagiri V."/>
            <person name="Nash W."/>
            <person name="Johnson M."/>
            <person name="Thiruvilangam P."/>
            <person name="Wilson R."/>
        </authorList>
    </citation>
    <scope>NUCLEOTIDE SEQUENCE [LARGE SCALE GENOMIC DNA]</scope>
    <source>
        <strain>ATCC BAA-731 / CDC346-86 / RSK2980</strain>
    </source>
</reference>
<gene>
    <name evidence="2" type="primary">mutM</name>
    <name evidence="2" type="synonym">fpg</name>
    <name type="ordered locus">SARI_03914</name>
</gene>
<evidence type="ECO:0000250" key="1"/>
<evidence type="ECO:0000255" key="2">
    <source>
        <dbReference type="HAMAP-Rule" id="MF_00103"/>
    </source>
</evidence>
<comment type="function">
    <text evidence="2">Involved in base excision repair of DNA damaged by oxidation or by mutagenic agents. Acts as a DNA glycosylase that recognizes and removes damaged bases. Has a preference for oxidized purines, such as 7,8-dihydro-8-oxoguanine (8-oxoG). Has AP (apurinic/apyrimidinic) lyase activity and introduces nicks in the DNA strand. Cleaves the DNA backbone by beta-delta elimination to generate a single-strand break at the site of the removed base with both 3'- and 5'-phosphates.</text>
</comment>
<comment type="catalytic activity">
    <reaction evidence="2">
        <text>Hydrolysis of DNA containing ring-opened 7-methylguanine residues, releasing 2,6-diamino-4-hydroxy-5-(N-methyl)formamidopyrimidine.</text>
        <dbReference type="EC" id="3.2.2.23"/>
    </reaction>
</comment>
<comment type="catalytic activity">
    <reaction evidence="2">
        <text>2'-deoxyribonucleotide-(2'-deoxyribose 5'-phosphate)-2'-deoxyribonucleotide-DNA = a 3'-end 2'-deoxyribonucleotide-(2,3-dehydro-2,3-deoxyribose 5'-phosphate)-DNA + a 5'-end 5'-phospho-2'-deoxyribonucleoside-DNA + H(+)</text>
        <dbReference type="Rhea" id="RHEA:66592"/>
        <dbReference type="Rhea" id="RHEA-COMP:13180"/>
        <dbReference type="Rhea" id="RHEA-COMP:16897"/>
        <dbReference type="Rhea" id="RHEA-COMP:17067"/>
        <dbReference type="ChEBI" id="CHEBI:15378"/>
        <dbReference type="ChEBI" id="CHEBI:136412"/>
        <dbReference type="ChEBI" id="CHEBI:157695"/>
        <dbReference type="ChEBI" id="CHEBI:167181"/>
        <dbReference type="EC" id="4.2.99.18"/>
    </reaction>
</comment>
<comment type="cofactor">
    <cofactor evidence="2">
        <name>Zn(2+)</name>
        <dbReference type="ChEBI" id="CHEBI:29105"/>
    </cofactor>
    <text evidence="2">Binds 1 zinc ion per subunit.</text>
</comment>
<comment type="subunit">
    <text evidence="2">Monomer.</text>
</comment>
<comment type="similarity">
    <text evidence="2">Belongs to the FPG family.</text>
</comment>
<feature type="initiator methionine" description="Removed" evidence="1">
    <location>
        <position position="1"/>
    </location>
</feature>
<feature type="chain" id="PRO_1000075709" description="Formamidopyrimidine-DNA glycosylase">
    <location>
        <begin position="2"/>
        <end position="269"/>
    </location>
</feature>
<feature type="zinc finger region" description="FPG-type" evidence="2">
    <location>
        <begin position="235"/>
        <end position="269"/>
    </location>
</feature>
<feature type="active site" description="Schiff-base intermediate with DNA" evidence="2">
    <location>
        <position position="2"/>
    </location>
</feature>
<feature type="active site" description="Proton donor" evidence="2">
    <location>
        <position position="3"/>
    </location>
</feature>
<feature type="active site" description="Proton donor; for beta-elimination activity" evidence="2">
    <location>
        <position position="57"/>
    </location>
</feature>
<feature type="active site" description="Proton donor; for delta-elimination activity" evidence="2">
    <location>
        <position position="259"/>
    </location>
</feature>
<feature type="binding site" evidence="2">
    <location>
        <position position="90"/>
    </location>
    <ligand>
        <name>DNA</name>
        <dbReference type="ChEBI" id="CHEBI:16991"/>
    </ligand>
</feature>
<feature type="binding site" evidence="2">
    <location>
        <position position="109"/>
    </location>
    <ligand>
        <name>DNA</name>
        <dbReference type="ChEBI" id="CHEBI:16991"/>
    </ligand>
</feature>
<feature type="binding site" evidence="2">
    <location>
        <position position="150"/>
    </location>
    <ligand>
        <name>DNA</name>
        <dbReference type="ChEBI" id="CHEBI:16991"/>
    </ligand>
</feature>
<organism>
    <name type="scientific">Salmonella arizonae (strain ATCC BAA-731 / CDC346-86 / RSK2980)</name>
    <dbReference type="NCBI Taxonomy" id="41514"/>
    <lineage>
        <taxon>Bacteria</taxon>
        <taxon>Pseudomonadati</taxon>
        <taxon>Pseudomonadota</taxon>
        <taxon>Gammaproteobacteria</taxon>
        <taxon>Enterobacterales</taxon>
        <taxon>Enterobacteriaceae</taxon>
        <taxon>Salmonella</taxon>
    </lineage>
</organism>
<sequence length="269" mass="30279">MPELPEVETSRRGIEPHLVGATILHAHIRNGRLRWPVSDEIYRLSDTPVLSVQRRAKYLLLELPDGWIIIHLGMSGSLRILSEAQPAEKHDHVDLVMSNGKILRYTDPRRFGAWLWTKELEGHNVLAHLGPEPLSDEFNGEYLQQKCAKRKTAIKPWLMDNKLVVGVGNIYASESLFAAGIHPDRLASSLSKEECDLLARVIKAVLLRSIEQGGTTLKDFLQSDGKPGYFAQELQVYGRKGEPCRVCGTPVVATKHAQRATFYCRHCQK</sequence>
<proteinExistence type="inferred from homology"/>
<keyword id="KW-0227">DNA damage</keyword>
<keyword id="KW-0234">DNA repair</keyword>
<keyword id="KW-0238">DNA-binding</keyword>
<keyword id="KW-0326">Glycosidase</keyword>
<keyword id="KW-0378">Hydrolase</keyword>
<keyword id="KW-0456">Lyase</keyword>
<keyword id="KW-0479">Metal-binding</keyword>
<keyword id="KW-0511">Multifunctional enzyme</keyword>
<keyword id="KW-1185">Reference proteome</keyword>
<keyword id="KW-0862">Zinc</keyword>
<keyword id="KW-0863">Zinc-finger</keyword>
<name>FPG_SALAR</name>
<accession>A9MKN9</accession>
<dbReference type="EC" id="3.2.2.23" evidence="2"/>
<dbReference type="EC" id="4.2.99.18" evidence="2"/>
<dbReference type="EMBL" id="CP000880">
    <property type="protein sequence ID" value="ABX23708.1"/>
    <property type="molecule type" value="Genomic_DNA"/>
</dbReference>
<dbReference type="SMR" id="A9MKN9"/>
<dbReference type="STRING" id="41514.SARI_03914"/>
<dbReference type="KEGG" id="ses:SARI_03914"/>
<dbReference type="HOGENOM" id="CLU_038423_1_1_6"/>
<dbReference type="Proteomes" id="UP000002084">
    <property type="component" value="Chromosome"/>
</dbReference>
<dbReference type="GO" id="GO:0034039">
    <property type="term" value="F:8-oxo-7,8-dihydroguanine DNA N-glycosylase activity"/>
    <property type="evidence" value="ECO:0007669"/>
    <property type="project" value="TreeGrafter"/>
</dbReference>
<dbReference type="GO" id="GO:0140078">
    <property type="term" value="F:class I DNA-(apurinic or apyrimidinic site) endonuclease activity"/>
    <property type="evidence" value="ECO:0007669"/>
    <property type="project" value="UniProtKB-EC"/>
</dbReference>
<dbReference type="GO" id="GO:0003684">
    <property type="term" value="F:damaged DNA binding"/>
    <property type="evidence" value="ECO:0007669"/>
    <property type="project" value="InterPro"/>
</dbReference>
<dbReference type="GO" id="GO:0008270">
    <property type="term" value="F:zinc ion binding"/>
    <property type="evidence" value="ECO:0007669"/>
    <property type="project" value="UniProtKB-UniRule"/>
</dbReference>
<dbReference type="GO" id="GO:0006284">
    <property type="term" value="P:base-excision repair"/>
    <property type="evidence" value="ECO:0007669"/>
    <property type="project" value="InterPro"/>
</dbReference>
<dbReference type="CDD" id="cd08966">
    <property type="entry name" value="EcFpg-like_N"/>
    <property type="match status" value="1"/>
</dbReference>
<dbReference type="FunFam" id="1.10.8.50:FF:000003">
    <property type="entry name" value="Formamidopyrimidine-DNA glycosylase"/>
    <property type="match status" value="1"/>
</dbReference>
<dbReference type="FunFam" id="3.20.190.10:FF:000001">
    <property type="entry name" value="Formamidopyrimidine-DNA glycosylase"/>
    <property type="match status" value="1"/>
</dbReference>
<dbReference type="Gene3D" id="1.10.8.50">
    <property type="match status" value="1"/>
</dbReference>
<dbReference type="Gene3D" id="3.20.190.10">
    <property type="entry name" value="MutM-like, N-terminal"/>
    <property type="match status" value="1"/>
</dbReference>
<dbReference type="HAMAP" id="MF_00103">
    <property type="entry name" value="Fapy_DNA_glycosyl"/>
    <property type="match status" value="1"/>
</dbReference>
<dbReference type="InterPro" id="IPR015886">
    <property type="entry name" value="DNA_glyclase/AP_lyase_DNA-bd"/>
</dbReference>
<dbReference type="InterPro" id="IPR015887">
    <property type="entry name" value="DNA_glyclase_Znf_dom_DNA_BS"/>
</dbReference>
<dbReference type="InterPro" id="IPR020629">
    <property type="entry name" value="Formamido-pyr_DNA_Glyclase"/>
</dbReference>
<dbReference type="InterPro" id="IPR012319">
    <property type="entry name" value="FPG_cat"/>
</dbReference>
<dbReference type="InterPro" id="IPR035937">
    <property type="entry name" value="MutM-like_N-ter"/>
</dbReference>
<dbReference type="InterPro" id="IPR010979">
    <property type="entry name" value="Ribosomal_uS13-like_H2TH"/>
</dbReference>
<dbReference type="InterPro" id="IPR000214">
    <property type="entry name" value="Znf_DNA_glyclase/AP_lyase"/>
</dbReference>
<dbReference type="InterPro" id="IPR010663">
    <property type="entry name" value="Znf_FPG/IleRS"/>
</dbReference>
<dbReference type="NCBIfam" id="TIGR00577">
    <property type="entry name" value="fpg"/>
    <property type="match status" value="1"/>
</dbReference>
<dbReference type="NCBIfam" id="NF002211">
    <property type="entry name" value="PRK01103.1"/>
    <property type="match status" value="1"/>
</dbReference>
<dbReference type="PANTHER" id="PTHR22993">
    <property type="entry name" value="FORMAMIDOPYRIMIDINE-DNA GLYCOSYLASE"/>
    <property type="match status" value="1"/>
</dbReference>
<dbReference type="PANTHER" id="PTHR22993:SF9">
    <property type="entry name" value="FORMAMIDOPYRIMIDINE-DNA GLYCOSYLASE"/>
    <property type="match status" value="1"/>
</dbReference>
<dbReference type="Pfam" id="PF01149">
    <property type="entry name" value="Fapy_DNA_glyco"/>
    <property type="match status" value="1"/>
</dbReference>
<dbReference type="Pfam" id="PF06831">
    <property type="entry name" value="H2TH"/>
    <property type="match status" value="1"/>
</dbReference>
<dbReference type="Pfam" id="PF06827">
    <property type="entry name" value="zf-FPG_IleRS"/>
    <property type="match status" value="1"/>
</dbReference>
<dbReference type="SMART" id="SM00898">
    <property type="entry name" value="Fapy_DNA_glyco"/>
    <property type="match status" value="1"/>
</dbReference>
<dbReference type="SMART" id="SM01232">
    <property type="entry name" value="H2TH"/>
    <property type="match status" value="1"/>
</dbReference>
<dbReference type="SUPFAM" id="SSF57716">
    <property type="entry name" value="Glucocorticoid receptor-like (DNA-binding domain)"/>
    <property type="match status" value="1"/>
</dbReference>
<dbReference type="SUPFAM" id="SSF81624">
    <property type="entry name" value="N-terminal domain of MutM-like DNA repair proteins"/>
    <property type="match status" value="1"/>
</dbReference>
<dbReference type="SUPFAM" id="SSF46946">
    <property type="entry name" value="S13-like H2TH domain"/>
    <property type="match status" value="1"/>
</dbReference>
<dbReference type="PROSITE" id="PS51068">
    <property type="entry name" value="FPG_CAT"/>
    <property type="match status" value="1"/>
</dbReference>
<dbReference type="PROSITE" id="PS01242">
    <property type="entry name" value="ZF_FPG_1"/>
    <property type="match status" value="1"/>
</dbReference>
<dbReference type="PROSITE" id="PS51066">
    <property type="entry name" value="ZF_FPG_2"/>
    <property type="match status" value="1"/>
</dbReference>